<organism>
    <name type="scientific">Ralstonia pickettii (strain 12J)</name>
    <dbReference type="NCBI Taxonomy" id="402626"/>
    <lineage>
        <taxon>Bacteria</taxon>
        <taxon>Pseudomonadati</taxon>
        <taxon>Pseudomonadota</taxon>
        <taxon>Betaproteobacteria</taxon>
        <taxon>Burkholderiales</taxon>
        <taxon>Burkholderiaceae</taxon>
        <taxon>Ralstonia</taxon>
    </lineage>
</organism>
<protein>
    <recommendedName>
        <fullName evidence="1">Imidazoleglycerol-phosphate dehydratase</fullName>
        <shortName evidence="1">IGPD</shortName>
        <ecNumber evidence="1">4.2.1.19</ecNumber>
    </recommendedName>
</protein>
<keyword id="KW-0028">Amino-acid biosynthesis</keyword>
<keyword id="KW-0963">Cytoplasm</keyword>
<keyword id="KW-0368">Histidine biosynthesis</keyword>
<keyword id="KW-0456">Lyase</keyword>
<name>HIS7_RALPJ</name>
<evidence type="ECO:0000255" key="1">
    <source>
        <dbReference type="HAMAP-Rule" id="MF_00076"/>
    </source>
</evidence>
<dbReference type="EC" id="4.2.1.19" evidence="1"/>
<dbReference type="EMBL" id="CP001068">
    <property type="protein sequence ID" value="ACD28349.1"/>
    <property type="molecule type" value="Genomic_DNA"/>
</dbReference>
<dbReference type="SMR" id="B2UEE9"/>
<dbReference type="STRING" id="402626.Rpic_3227"/>
<dbReference type="KEGG" id="rpi:Rpic_3227"/>
<dbReference type="eggNOG" id="COG0131">
    <property type="taxonomic scope" value="Bacteria"/>
</dbReference>
<dbReference type="HOGENOM" id="CLU_044308_2_0_4"/>
<dbReference type="UniPathway" id="UPA00031">
    <property type="reaction ID" value="UER00011"/>
</dbReference>
<dbReference type="GO" id="GO:0005737">
    <property type="term" value="C:cytoplasm"/>
    <property type="evidence" value="ECO:0007669"/>
    <property type="project" value="UniProtKB-SubCell"/>
</dbReference>
<dbReference type="GO" id="GO:0004424">
    <property type="term" value="F:imidazoleglycerol-phosphate dehydratase activity"/>
    <property type="evidence" value="ECO:0007669"/>
    <property type="project" value="UniProtKB-UniRule"/>
</dbReference>
<dbReference type="GO" id="GO:0000105">
    <property type="term" value="P:L-histidine biosynthetic process"/>
    <property type="evidence" value="ECO:0007669"/>
    <property type="project" value="UniProtKB-UniRule"/>
</dbReference>
<dbReference type="CDD" id="cd07914">
    <property type="entry name" value="IGPD"/>
    <property type="match status" value="1"/>
</dbReference>
<dbReference type="FunFam" id="3.30.230.40:FF:000002">
    <property type="entry name" value="Imidazoleglycerol-phosphate dehydratase"/>
    <property type="match status" value="1"/>
</dbReference>
<dbReference type="FunFam" id="3.30.230.40:FF:000003">
    <property type="entry name" value="Imidazoleglycerol-phosphate dehydratase HisB"/>
    <property type="match status" value="1"/>
</dbReference>
<dbReference type="Gene3D" id="3.30.230.40">
    <property type="entry name" value="Imidazole glycerol phosphate dehydratase, domain 1"/>
    <property type="match status" value="2"/>
</dbReference>
<dbReference type="HAMAP" id="MF_00076">
    <property type="entry name" value="HisB"/>
    <property type="match status" value="1"/>
</dbReference>
<dbReference type="InterPro" id="IPR038494">
    <property type="entry name" value="IGPD_sf"/>
</dbReference>
<dbReference type="InterPro" id="IPR000807">
    <property type="entry name" value="ImidazoleglycerolP_deHydtase"/>
</dbReference>
<dbReference type="InterPro" id="IPR020565">
    <property type="entry name" value="ImidazoleglycerP_deHydtase_CS"/>
</dbReference>
<dbReference type="InterPro" id="IPR020568">
    <property type="entry name" value="Ribosomal_Su5_D2-typ_SF"/>
</dbReference>
<dbReference type="NCBIfam" id="NF002106">
    <property type="entry name" value="PRK00951.1-1"/>
    <property type="match status" value="1"/>
</dbReference>
<dbReference type="NCBIfam" id="NF002109">
    <property type="entry name" value="PRK00951.1-5"/>
    <property type="match status" value="1"/>
</dbReference>
<dbReference type="NCBIfam" id="NF002111">
    <property type="entry name" value="PRK00951.2-1"/>
    <property type="match status" value="1"/>
</dbReference>
<dbReference type="NCBIfam" id="NF002114">
    <property type="entry name" value="PRK00951.2-4"/>
    <property type="match status" value="1"/>
</dbReference>
<dbReference type="PANTHER" id="PTHR23133:SF2">
    <property type="entry name" value="IMIDAZOLEGLYCEROL-PHOSPHATE DEHYDRATASE"/>
    <property type="match status" value="1"/>
</dbReference>
<dbReference type="PANTHER" id="PTHR23133">
    <property type="entry name" value="IMIDAZOLEGLYCEROL-PHOSPHATE DEHYDRATASE HIS7"/>
    <property type="match status" value="1"/>
</dbReference>
<dbReference type="Pfam" id="PF00475">
    <property type="entry name" value="IGPD"/>
    <property type="match status" value="1"/>
</dbReference>
<dbReference type="SUPFAM" id="SSF54211">
    <property type="entry name" value="Ribosomal protein S5 domain 2-like"/>
    <property type="match status" value="2"/>
</dbReference>
<dbReference type="PROSITE" id="PS00954">
    <property type="entry name" value="IGP_DEHYDRATASE_1"/>
    <property type="match status" value="1"/>
</dbReference>
<dbReference type="PROSITE" id="PS00955">
    <property type="entry name" value="IGP_DEHYDRATASE_2"/>
    <property type="match status" value="1"/>
</dbReference>
<proteinExistence type="inferred from homology"/>
<sequence length="196" mass="21402">MSRRAEVTRNTSETQIRVALDLDGTGKQTLNTGVPFLDHMLDQIARHGMVDLDVSATGDTHIDDHHTVEDVGITLGQAVAKAIGDKKGIVRYGHSYVPLDEALSRVVIDFSGRPGLEFHVPFTRARVGNFDVDLSIEFFRGFVNHAGVTLHIDNLRGVNAHHQIETVFKAFGRALRMAVEIDPRAAGTIPSTKGAL</sequence>
<feature type="chain" id="PRO_1000092711" description="Imidazoleglycerol-phosphate dehydratase">
    <location>
        <begin position="1"/>
        <end position="196"/>
    </location>
</feature>
<accession>B2UEE9</accession>
<comment type="catalytic activity">
    <reaction evidence="1">
        <text>D-erythro-1-(imidazol-4-yl)glycerol 3-phosphate = 3-(imidazol-4-yl)-2-oxopropyl phosphate + H2O</text>
        <dbReference type="Rhea" id="RHEA:11040"/>
        <dbReference type="ChEBI" id="CHEBI:15377"/>
        <dbReference type="ChEBI" id="CHEBI:57766"/>
        <dbReference type="ChEBI" id="CHEBI:58278"/>
        <dbReference type="EC" id="4.2.1.19"/>
    </reaction>
</comment>
<comment type="pathway">
    <text evidence="1">Amino-acid biosynthesis; L-histidine biosynthesis; L-histidine from 5-phospho-alpha-D-ribose 1-diphosphate: step 6/9.</text>
</comment>
<comment type="subcellular location">
    <subcellularLocation>
        <location evidence="1">Cytoplasm</location>
    </subcellularLocation>
</comment>
<comment type="similarity">
    <text evidence="1">Belongs to the imidazoleglycerol-phosphate dehydratase family.</text>
</comment>
<gene>
    <name evidence="1" type="primary">hisB</name>
    <name type="ordered locus">Rpic_3227</name>
</gene>
<reference key="1">
    <citation type="submission" date="2008-05" db="EMBL/GenBank/DDBJ databases">
        <title>Complete sequence of chromosome 1 of Ralstonia pickettii 12J.</title>
        <authorList>
            <person name="Lucas S."/>
            <person name="Copeland A."/>
            <person name="Lapidus A."/>
            <person name="Glavina del Rio T."/>
            <person name="Dalin E."/>
            <person name="Tice H."/>
            <person name="Bruce D."/>
            <person name="Goodwin L."/>
            <person name="Pitluck S."/>
            <person name="Meincke L."/>
            <person name="Brettin T."/>
            <person name="Detter J.C."/>
            <person name="Han C."/>
            <person name="Kuske C.R."/>
            <person name="Schmutz J."/>
            <person name="Larimer F."/>
            <person name="Land M."/>
            <person name="Hauser L."/>
            <person name="Kyrpides N."/>
            <person name="Mikhailova N."/>
            <person name="Marsh T."/>
            <person name="Richardson P."/>
        </authorList>
    </citation>
    <scope>NUCLEOTIDE SEQUENCE [LARGE SCALE GENOMIC DNA]</scope>
    <source>
        <strain>12J</strain>
    </source>
</reference>